<proteinExistence type="inferred from homology"/>
<sequence>MKMSEIRRNVPVNEQIQLLKRGVVDLVSEEDLKRKIEKGEPLRVKLGADPTRPDLHLGHAVILRKMRQFQDLGHKVIMLIGDFTATIGDPSGKSKTRPPLSLEEARANAESYLAQCRLILRQEPEALEIRYNSEWLEQLGYKDIIGLAAKYTVARILERDDFTKRLSAGTPISMHELLYPLTQGYDSVALHADVELGGTDQLFNNLVGRALQRDYGQEAQVVLTLPLLVGLDGTEKMSKSLDNYIGLTDEPHAMFAGLMKVPDPLLDNYFTLLTDLPRERIEELLAGHPVAAHRELAREVVRAFHPDADLDAAEARFRSVAKGGIPDNIPAVSVPASELNEQGHVSMAKLVVLAGLEPSNGAARKLIQNRGLKLGGETYSDPQGQLTREQLTEGVVIQKGKDKFARLVLEG</sequence>
<reference key="1">
    <citation type="journal article" date="1999" name="Science">
        <title>Genome sequence of the radioresistant bacterium Deinococcus radiodurans R1.</title>
        <authorList>
            <person name="White O."/>
            <person name="Eisen J.A."/>
            <person name="Heidelberg J.F."/>
            <person name="Hickey E.K."/>
            <person name="Peterson J.D."/>
            <person name="Dodson R.J."/>
            <person name="Haft D.H."/>
            <person name="Gwinn M.L."/>
            <person name="Nelson W.C."/>
            <person name="Richardson D.L."/>
            <person name="Moffat K.S."/>
            <person name="Qin H."/>
            <person name="Jiang L."/>
            <person name="Pamphile W."/>
            <person name="Crosby M."/>
            <person name="Shen M."/>
            <person name="Vamathevan J.J."/>
            <person name="Lam P."/>
            <person name="McDonald L.A."/>
            <person name="Utterback T.R."/>
            <person name="Zalewski C."/>
            <person name="Makarova K.S."/>
            <person name="Aravind L."/>
            <person name="Daly M.J."/>
            <person name="Minton K.W."/>
            <person name="Fleischmann R.D."/>
            <person name="Ketchum K.A."/>
            <person name="Nelson K.E."/>
            <person name="Salzberg S.L."/>
            <person name="Smith H.O."/>
            <person name="Venter J.C."/>
            <person name="Fraser C.M."/>
        </authorList>
    </citation>
    <scope>NUCLEOTIDE SEQUENCE [LARGE SCALE GENOMIC DNA]</scope>
    <source>
        <strain>ATCC 13939 / DSM 20539 / JCM 16871 / CCUG 27074 / LMG 4051 / NBRC 15346 / NCIMB 9279 / VKM B-1422 / R1</strain>
    </source>
</reference>
<dbReference type="EC" id="6.1.1.1" evidence="1"/>
<dbReference type="EMBL" id="AE000513">
    <property type="protein sequence ID" value="AAF12170.1"/>
    <property type="molecule type" value="Genomic_DNA"/>
</dbReference>
<dbReference type="PIR" id="A75251">
    <property type="entry name" value="A75251"/>
</dbReference>
<dbReference type="RefSeq" id="NP_296353.1">
    <property type="nucleotide sequence ID" value="NC_001263.1"/>
</dbReference>
<dbReference type="SMR" id="Q9RR63"/>
<dbReference type="FunCoup" id="Q9RR63">
    <property type="interactions" value="75"/>
</dbReference>
<dbReference type="STRING" id="243230.DR_2634"/>
<dbReference type="PaxDb" id="243230-DR_2634"/>
<dbReference type="EnsemblBacteria" id="AAF12170">
    <property type="protein sequence ID" value="AAF12170"/>
    <property type="gene ID" value="DR_2634"/>
</dbReference>
<dbReference type="KEGG" id="dra:DR_2634"/>
<dbReference type="PATRIC" id="fig|243230.17.peg.2883"/>
<dbReference type="eggNOG" id="COG0162">
    <property type="taxonomic scope" value="Bacteria"/>
</dbReference>
<dbReference type="HOGENOM" id="CLU_024003_5_0_0"/>
<dbReference type="InParanoid" id="Q9RR63"/>
<dbReference type="OrthoDB" id="9804243at2"/>
<dbReference type="Proteomes" id="UP000002524">
    <property type="component" value="Chromosome 1"/>
</dbReference>
<dbReference type="GO" id="GO:0005829">
    <property type="term" value="C:cytosol"/>
    <property type="evidence" value="ECO:0000318"/>
    <property type="project" value="GO_Central"/>
</dbReference>
<dbReference type="GO" id="GO:0005524">
    <property type="term" value="F:ATP binding"/>
    <property type="evidence" value="ECO:0007669"/>
    <property type="project" value="UniProtKB-UniRule"/>
</dbReference>
<dbReference type="GO" id="GO:0003723">
    <property type="term" value="F:RNA binding"/>
    <property type="evidence" value="ECO:0007669"/>
    <property type="project" value="UniProtKB-KW"/>
</dbReference>
<dbReference type="GO" id="GO:0004831">
    <property type="term" value="F:tyrosine-tRNA ligase activity"/>
    <property type="evidence" value="ECO:0000318"/>
    <property type="project" value="GO_Central"/>
</dbReference>
<dbReference type="GO" id="GO:0043039">
    <property type="term" value="P:tRNA aminoacylation"/>
    <property type="evidence" value="ECO:0000318"/>
    <property type="project" value="GO_Central"/>
</dbReference>
<dbReference type="GO" id="GO:0006437">
    <property type="term" value="P:tyrosyl-tRNA aminoacylation"/>
    <property type="evidence" value="ECO:0007669"/>
    <property type="project" value="UniProtKB-UniRule"/>
</dbReference>
<dbReference type="CDD" id="cd00805">
    <property type="entry name" value="TyrRS_core"/>
    <property type="match status" value="1"/>
</dbReference>
<dbReference type="FunFam" id="1.10.240.10:FF:000013">
    <property type="entry name" value="Tyrosine--tRNA ligase"/>
    <property type="match status" value="1"/>
</dbReference>
<dbReference type="FunFam" id="3.10.290.10:FF:000022">
    <property type="entry name" value="Tyrosine--tRNA ligase"/>
    <property type="match status" value="1"/>
</dbReference>
<dbReference type="FunFam" id="3.40.50.620:FF:000061">
    <property type="entry name" value="Tyrosine--tRNA ligase"/>
    <property type="match status" value="1"/>
</dbReference>
<dbReference type="Gene3D" id="3.40.50.620">
    <property type="entry name" value="HUPs"/>
    <property type="match status" value="1"/>
</dbReference>
<dbReference type="Gene3D" id="3.10.290.10">
    <property type="entry name" value="RNA-binding S4 domain"/>
    <property type="match status" value="1"/>
</dbReference>
<dbReference type="Gene3D" id="1.10.240.10">
    <property type="entry name" value="Tyrosyl-Transfer RNA Synthetase"/>
    <property type="match status" value="1"/>
</dbReference>
<dbReference type="HAMAP" id="MF_02007">
    <property type="entry name" value="Tyr_tRNA_synth_type2"/>
    <property type="match status" value="1"/>
</dbReference>
<dbReference type="InterPro" id="IPR002305">
    <property type="entry name" value="aa-tRNA-synth_Ic"/>
</dbReference>
<dbReference type="InterPro" id="IPR014729">
    <property type="entry name" value="Rossmann-like_a/b/a_fold"/>
</dbReference>
<dbReference type="InterPro" id="IPR036986">
    <property type="entry name" value="S4_RNA-bd_sf"/>
</dbReference>
<dbReference type="InterPro" id="IPR054608">
    <property type="entry name" value="SYY-like_C"/>
</dbReference>
<dbReference type="InterPro" id="IPR002307">
    <property type="entry name" value="Tyr-tRNA-ligase"/>
</dbReference>
<dbReference type="InterPro" id="IPR024088">
    <property type="entry name" value="Tyr-tRNA-ligase_bac-type"/>
</dbReference>
<dbReference type="InterPro" id="IPR024108">
    <property type="entry name" value="Tyr-tRNA-ligase_bac_2"/>
</dbReference>
<dbReference type="NCBIfam" id="TIGR00234">
    <property type="entry name" value="tyrS"/>
    <property type="match status" value="1"/>
</dbReference>
<dbReference type="PANTHER" id="PTHR11766:SF1">
    <property type="entry name" value="TYROSINE--TRNA LIGASE"/>
    <property type="match status" value="1"/>
</dbReference>
<dbReference type="PANTHER" id="PTHR11766">
    <property type="entry name" value="TYROSYL-TRNA SYNTHETASE"/>
    <property type="match status" value="1"/>
</dbReference>
<dbReference type="Pfam" id="PF22421">
    <property type="entry name" value="SYY_C-terminal"/>
    <property type="match status" value="1"/>
</dbReference>
<dbReference type="Pfam" id="PF00579">
    <property type="entry name" value="tRNA-synt_1b"/>
    <property type="match status" value="1"/>
</dbReference>
<dbReference type="PRINTS" id="PR01040">
    <property type="entry name" value="TRNASYNTHTYR"/>
</dbReference>
<dbReference type="SUPFAM" id="SSF55174">
    <property type="entry name" value="Alpha-L RNA-binding motif"/>
    <property type="match status" value="1"/>
</dbReference>
<dbReference type="SUPFAM" id="SSF52374">
    <property type="entry name" value="Nucleotidylyl transferase"/>
    <property type="match status" value="1"/>
</dbReference>
<dbReference type="PROSITE" id="PS50889">
    <property type="entry name" value="S4"/>
    <property type="match status" value="1"/>
</dbReference>
<feature type="chain" id="PRO_0000236715" description="Tyrosine--tRNA ligase">
    <location>
        <begin position="1"/>
        <end position="411"/>
    </location>
</feature>
<feature type="domain" description="S4 RNA-binding" evidence="1">
    <location>
        <begin position="345"/>
        <end position="409"/>
    </location>
</feature>
<feature type="short sequence motif" description="'HIGH' region">
    <location>
        <begin position="50"/>
        <end position="59"/>
    </location>
</feature>
<feature type="short sequence motif" description="'KMSKS' region">
    <location>
        <begin position="236"/>
        <end position="240"/>
    </location>
</feature>
<feature type="binding site" evidence="1">
    <location>
        <position position="239"/>
    </location>
    <ligand>
        <name>ATP</name>
        <dbReference type="ChEBI" id="CHEBI:30616"/>
    </ligand>
</feature>
<accession>Q9RR63</accession>
<name>SYY_DEIRA</name>
<protein>
    <recommendedName>
        <fullName evidence="1">Tyrosine--tRNA ligase</fullName>
        <ecNumber evidence="1">6.1.1.1</ecNumber>
    </recommendedName>
    <alternativeName>
        <fullName evidence="1">Tyrosyl-tRNA synthetase</fullName>
        <shortName evidence="1">TyrRS</shortName>
    </alternativeName>
</protein>
<comment type="function">
    <text evidence="1">Catalyzes the attachment of tyrosine to tRNA(Tyr) in a two-step reaction: tyrosine is first activated by ATP to form Tyr-AMP and then transferred to the acceptor end of tRNA(Tyr).</text>
</comment>
<comment type="catalytic activity">
    <reaction evidence="1">
        <text>tRNA(Tyr) + L-tyrosine + ATP = L-tyrosyl-tRNA(Tyr) + AMP + diphosphate + H(+)</text>
        <dbReference type="Rhea" id="RHEA:10220"/>
        <dbReference type="Rhea" id="RHEA-COMP:9706"/>
        <dbReference type="Rhea" id="RHEA-COMP:9707"/>
        <dbReference type="ChEBI" id="CHEBI:15378"/>
        <dbReference type="ChEBI" id="CHEBI:30616"/>
        <dbReference type="ChEBI" id="CHEBI:33019"/>
        <dbReference type="ChEBI" id="CHEBI:58315"/>
        <dbReference type="ChEBI" id="CHEBI:78442"/>
        <dbReference type="ChEBI" id="CHEBI:78536"/>
        <dbReference type="ChEBI" id="CHEBI:456215"/>
        <dbReference type="EC" id="6.1.1.1"/>
    </reaction>
</comment>
<comment type="subunit">
    <text evidence="1">Homodimer.</text>
</comment>
<comment type="subcellular location">
    <subcellularLocation>
        <location evidence="1">Cytoplasm</location>
    </subcellularLocation>
</comment>
<comment type="similarity">
    <text evidence="1">Belongs to the class-I aminoacyl-tRNA synthetase family. TyrS type 2 subfamily.</text>
</comment>
<organism>
    <name type="scientific">Deinococcus radiodurans (strain ATCC 13939 / DSM 20539 / JCM 16871 / CCUG 27074 / LMG 4051 / NBRC 15346 / NCIMB 9279 / VKM B-1422 / R1)</name>
    <dbReference type="NCBI Taxonomy" id="243230"/>
    <lineage>
        <taxon>Bacteria</taxon>
        <taxon>Thermotogati</taxon>
        <taxon>Deinococcota</taxon>
        <taxon>Deinococci</taxon>
        <taxon>Deinococcales</taxon>
        <taxon>Deinococcaceae</taxon>
        <taxon>Deinococcus</taxon>
    </lineage>
</organism>
<gene>
    <name evidence="1" type="primary">tyrS</name>
    <name type="ordered locus">DR_2634</name>
</gene>
<evidence type="ECO:0000255" key="1">
    <source>
        <dbReference type="HAMAP-Rule" id="MF_02007"/>
    </source>
</evidence>
<keyword id="KW-0030">Aminoacyl-tRNA synthetase</keyword>
<keyword id="KW-0067">ATP-binding</keyword>
<keyword id="KW-0963">Cytoplasm</keyword>
<keyword id="KW-0436">Ligase</keyword>
<keyword id="KW-0547">Nucleotide-binding</keyword>
<keyword id="KW-0648">Protein biosynthesis</keyword>
<keyword id="KW-1185">Reference proteome</keyword>
<keyword id="KW-0694">RNA-binding</keyword>